<feature type="peptide" id="PRO_0000044648" description="Esculentin-2A" evidence="1">
    <location>
        <begin position="1"/>
        <end position="37"/>
    </location>
</feature>
<feature type="disulfide bond" evidence="1">
    <location>
        <begin position="31"/>
        <end position="37"/>
    </location>
</feature>
<name>ES2A_PELLE</name>
<reference key="1">
    <citation type="journal article" date="1994" name="J. Biol. Chem.">
        <title>Antimicrobial peptides from skin secretions of Rana esculenta. Molecular cloning of cDNAs encoding esculentin and brevinins and isolation of new active peptides.</title>
        <authorList>
            <person name="Simmaco M."/>
            <person name="Mignogna G."/>
            <person name="Barra D."/>
            <person name="Bossa F."/>
        </authorList>
    </citation>
    <scope>PROTEIN SEQUENCE</scope>
    <scope>DISULFIDE BOND</scope>
    <scope>SUBCELLULAR LOCATION</scope>
    <source>
        <tissue>Skin secretion</tissue>
    </source>
</reference>
<protein>
    <recommendedName>
        <fullName evidence="2">Esculentin-2A</fullName>
    </recommendedName>
</protein>
<dbReference type="PIR" id="E53578">
    <property type="entry name" value="E53578"/>
</dbReference>
<dbReference type="SMR" id="P40845"/>
<dbReference type="GO" id="GO:0005576">
    <property type="term" value="C:extracellular region"/>
    <property type="evidence" value="ECO:0007669"/>
    <property type="project" value="UniProtKB-SubCell"/>
</dbReference>
<dbReference type="GO" id="GO:0042742">
    <property type="term" value="P:defense response to bacterium"/>
    <property type="evidence" value="ECO:0007669"/>
    <property type="project" value="UniProtKB-KW"/>
</dbReference>
<dbReference type="GO" id="GO:0031640">
    <property type="term" value="P:killing of cells of another organism"/>
    <property type="evidence" value="ECO:0007669"/>
    <property type="project" value="UniProtKB-KW"/>
</dbReference>
<dbReference type="InterPro" id="IPR012521">
    <property type="entry name" value="Antimicrobial_frog_2"/>
</dbReference>
<dbReference type="Pfam" id="PF08023">
    <property type="entry name" value="Antimicrobial_2"/>
    <property type="match status" value="1"/>
</dbReference>
<organism>
    <name type="scientific">Pelophylax lessonae</name>
    <name type="common">Pool frog</name>
    <name type="synonym">Rana lessonae</name>
    <dbReference type="NCBI Taxonomy" id="45623"/>
    <lineage>
        <taxon>Eukaryota</taxon>
        <taxon>Metazoa</taxon>
        <taxon>Chordata</taxon>
        <taxon>Craniata</taxon>
        <taxon>Vertebrata</taxon>
        <taxon>Euteleostomi</taxon>
        <taxon>Amphibia</taxon>
        <taxon>Batrachia</taxon>
        <taxon>Anura</taxon>
        <taxon>Neobatrachia</taxon>
        <taxon>Ranoidea</taxon>
        <taxon>Ranidae</taxon>
        <taxon>Pelophylax</taxon>
    </lineage>
</organism>
<accession>P40845</accession>
<keyword id="KW-0878">Amphibian defense peptide</keyword>
<keyword id="KW-0044">Antibiotic</keyword>
<keyword id="KW-0929">Antimicrobial</keyword>
<keyword id="KW-0204">Cytolysis</keyword>
<keyword id="KW-0903">Direct protein sequencing</keyword>
<keyword id="KW-1015">Disulfide bond</keyword>
<keyword id="KW-0354">Hemolysis</keyword>
<keyword id="KW-0964">Secreted</keyword>
<comment type="function">
    <text>Shows antibacterial activity against representative Gram-negative and Gram-positive bacterial species, and hemolytic activity.</text>
</comment>
<comment type="subcellular location">
    <subcellularLocation>
        <location evidence="1">Secreted</location>
    </subcellularLocation>
</comment>
<comment type="tissue specificity">
    <text evidence="4">Expressed by the skin glands.</text>
</comment>
<comment type="similarity">
    <text evidence="3">Belongs to the frog skin active peptide (FSAP) family. Esculentin subfamily.</text>
</comment>
<comment type="online information" name="The antimicrobial peptide database">
    <link uri="https://wangapd3.com/database/query_output.php?ID=00083"/>
</comment>
<sequence>GILSLVKGVAKLAGKGLAKEGGKFGLELIACKIAKQC</sequence>
<evidence type="ECO:0000269" key="1">
    <source>
    </source>
</evidence>
<evidence type="ECO:0000303" key="2">
    <source>
    </source>
</evidence>
<evidence type="ECO:0000305" key="3"/>
<evidence type="ECO:0000305" key="4">
    <source>
    </source>
</evidence>
<proteinExistence type="evidence at protein level"/>